<name>NUOE2_RHIME</name>
<proteinExistence type="inferred from homology"/>
<feature type="chain" id="PRO_0000118699" description="NADH-quinone oxidoreductase subunit E 2">
    <location>
        <begin position="1"/>
        <end position="168"/>
    </location>
</feature>
<feature type="binding site" evidence="2">
    <location>
        <position position="77"/>
    </location>
    <ligand>
        <name>[2Fe-2S] cluster</name>
        <dbReference type="ChEBI" id="CHEBI:190135"/>
    </ligand>
</feature>
<feature type="binding site" evidence="2">
    <location>
        <position position="82"/>
    </location>
    <ligand>
        <name>[2Fe-2S] cluster</name>
        <dbReference type="ChEBI" id="CHEBI:190135"/>
    </ligand>
</feature>
<feature type="binding site" evidence="2">
    <location>
        <position position="118"/>
    </location>
    <ligand>
        <name>[2Fe-2S] cluster</name>
        <dbReference type="ChEBI" id="CHEBI:190135"/>
    </ligand>
</feature>
<feature type="binding site" evidence="2">
    <location>
        <position position="122"/>
    </location>
    <ligand>
        <name>[2Fe-2S] cluster</name>
        <dbReference type="ChEBI" id="CHEBI:190135"/>
    </ligand>
</feature>
<feature type="sequence conflict" description="In Ref. 1; CAB51633." evidence="3" ref="1">
    <original>T</original>
    <variation>K</variation>
    <location>
        <position position="96"/>
    </location>
</feature>
<accession>P56910</accession>
<reference key="1">
    <citation type="submission" date="1999-07" db="EMBL/GenBank/DDBJ databases">
        <title>Rhizobium meliloti carries two sets of nuo genes.</title>
        <authorList>
            <person name="Putnoky P."/>
            <person name="Jady B."/>
            <person name="Chellapilla K.P."/>
            <person name="Barta F."/>
            <person name="Kiss E."/>
        </authorList>
    </citation>
    <scope>NUCLEOTIDE SEQUENCE [GENOMIC DNA]</scope>
    <source>
        <strain>41</strain>
    </source>
</reference>
<reference key="2">
    <citation type="journal article" date="2001" name="Proc. Natl. Acad. Sci. U.S.A.">
        <title>Nucleotide sequence and predicted functions of the entire Sinorhizobium meliloti pSymA megaplasmid.</title>
        <authorList>
            <person name="Barnett M.J."/>
            <person name="Fisher R.F."/>
            <person name="Jones T."/>
            <person name="Komp C."/>
            <person name="Abola A.P."/>
            <person name="Barloy-Hubler F."/>
            <person name="Bowser L."/>
            <person name="Capela D."/>
            <person name="Galibert F."/>
            <person name="Gouzy J."/>
            <person name="Gurjal M."/>
            <person name="Hong A."/>
            <person name="Huizar L."/>
            <person name="Hyman R.W."/>
            <person name="Kahn D."/>
            <person name="Kahn M.L."/>
            <person name="Kalman S."/>
            <person name="Keating D.H."/>
            <person name="Palm C."/>
            <person name="Peck M.C."/>
            <person name="Surzycki R."/>
            <person name="Wells D.H."/>
            <person name="Yeh K.-C."/>
            <person name="Davis R.W."/>
            <person name="Federspiel N.A."/>
            <person name="Long S.R."/>
        </authorList>
    </citation>
    <scope>NUCLEOTIDE SEQUENCE [LARGE SCALE GENOMIC DNA]</scope>
    <source>
        <strain>1021</strain>
    </source>
</reference>
<reference key="3">
    <citation type="journal article" date="2001" name="Science">
        <title>The composite genome of the legume symbiont Sinorhizobium meliloti.</title>
        <authorList>
            <person name="Galibert F."/>
            <person name="Finan T.M."/>
            <person name="Long S.R."/>
            <person name="Puehler A."/>
            <person name="Abola P."/>
            <person name="Ampe F."/>
            <person name="Barloy-Hubler F."/>
            <person name="Barnett M.J."/>
            <person name="Becker A."/>
            <person name="Boistard P."/>
            <person name="Bothe G."/>
            <person name="Boutry M."/>
            <person name="Bowser L."/>
            <person name="Buhrmester J."/>
            <person name="Cadieu E."/>
            <person name="Capela D."/>
            <person name="Chain P."/>
            <person name="Cowie A."/>
            <person name="Davis R.W."/>
            <person name="Dreano S."/>
            <person name="Federspiel N.A."/>
            <person name="Fisher R.F."/>
            <person name="Gloux S."/>
            <person name="Godrie T."/>
            <person name="Goffeau A."/>
            <person name="Golding B."/>
            <person name="Gouzy J."/>
            <person name="Gurjal M."/>
            <person name="Hernandez-Lucas I."/>
            <person name="Hong A."/>
            <person name="Huizar L."/>
            <person name="Hyman R.W."/>
            <person name="Jones T."/>
            <person name="Kahn D."/>
            <person name="Kahn M.L."/>
            <person name="Kalman S."/>
            <person name="Keating D.H."/>
            <person name="Kiss E."/>
            <person name="Komp C."/>
            <person name="Lelaure V."/>
            <person name="Masuy D."/>
            <person name="Palm C."/>
            <person name="Peck M.C."/>
            <person name="Pohl T.M."/>
            <person name="Portetelle D."/>
            <person name="Purnelle B."/>
            <person name="Ramsperger U."/>
            <person name="Surzycki R."/>
            <person name="Thebault P."/>
            <person name="Vandenbol M."/>
            <person name="Vorhoelter F.J."/>
            <person name="Weidner S."/>
            <person name="Wells D.H."/>
            <person name="Wong K."/>
            <person name="Yeh K.-C."/>
            <person name="Batut J."/>
        </authorList>
    </citation>
    <scope>NUCLEOTIDE SEQUENCE [LARGE SCALE GENOMIC DNA]</scope>
    <source>
        <strain>1021</strain>
    </source>
</reference>
<evidence type="ECO:0000250" key="1"/>
<evidence type="ECO:0000255" key="2"/>
<evidence type="ECO:0000305" key="3"/>
<sequence length="168" mass="18375">MTMREEIEAAAARYPDRRSAIMPALMIAQKEHGHLPGPVLEEVAQILGVERVWVYELATFYTLFHTEPIGRFHLQLCDNVSCMLCGSEALLTHLETTLGIRKGETTPDGAFTLSTVECLGACEMAPVMQVGDDYHGNLDAARLDALLESFRAAERVTSVERAAAAPGE</sequence>
<organism>
    <name type="scientific">Rhizobium meliloti (strain 1021)</name>
    <name type="common">Ensifer meliloti</name>
    <name type="synonym">Sinorhizobium meliloti</name>
    <dbReference type="NCBI Taxonomy" id="266834"/>
    <lineage>
        <taxon>Bacteria</taxon>
        <taxon>Pseudomonadati</taxon>
        <taxon>Pseudomonadota</taxon>
        <taxon>Alphaproteobacteria</taxon>
        <taxon>Hyphomicrobiales</taxon>
        <taxon>Rhizobiaceae</taxon>
        <taxon>Sinorhizobium/Ensifer group</taxon>
        <taxon>Sinorhizobium</taxon>
    </lineage>
</organism>
<gene>
    <name type="primary">nuoE2</name>
    <name type="ordered locus">RA0830</name>
    <name type="ORF">SMa1526</name>
</gene>
<protein>
    <recommendedName>
        <fullName>NADH-quinone oxidoreductase subunit E 2</fullName>
        <ecNumber>7.1.1.-</ecNumber>
    </recommendedName>
    <alternativeName>
        <fullName>NADH dehydrogenase I subunit E 2</fullName>
    </alternativeName>
    <alternativeName>
        <fullName>NDH-1 subunit E 2</fullName>
    </alternativeName>
</protein>
<comment type="function">
    <text evidence="1">NDH-1 shuttles electrons from NADH, via FMN and iron-sulfur (Fe-S) centers, to quinones in the respiratory chain. The immediate electron acceptor for the enzyme in this species is believed to be ubiquinone. Couples the redox reaction to proton translocation (for every two electrons transferred, four hydrogen ions are translocated across the cytoplasmic membrane), and thus conserves the redox energy in a proton gradient (By similarity).</text>
</comment>
<comment type="catalytic activity">
    <reaction>
        <text>a quinone + NADH + 5 H(+)(in) = a quinol + NAD(+) + 4 H(+)(out)</text>
        <dbReference type="Rhea" id="RHEA:57888"/>
        <dbReference type="ChEBI" id="CHEBI:15378"/>
        <dbReference type="ChEBI" id="CHEBI:24646"/>
        <dbReference type="ChEBI" id="CHEBI:57540"/>
        <dbReference type="ChEBI" id="CHEBI:57945"/>
        <dbReference type="ChEBI" id="CHEBI:132124"/>
    </reaction>
</comment>
<comment type="cofactor">
    <cofactor evidence="3">
        <name>[2Fe-2S] cluster</name>
        <dbReference type="ChEBI" id="CHEBI:190135"/>
    </cofactor>
    <text evidence="3">Binds 1 [2Fe-2S] cluster.</text>
</comment>
<comment type="similarity">
    <text evidence="3">Belongs to the complex I 24 kDa subunit family.</text>
</comment>
<geneLocation type="plasmid">
    <name>pSymA</name>
    <name>megaplasmid 1</name>
</geneLocation>
<keyword id="KW-0001">2Fe-2S</keyword>
<keyword id="KW-0408">Iron</keyword>
<keyword id="KW-0411">Iron-sulfur</keyword>
<keyword id="KW-0479">Metal-binding</keyword>
<keyword id="KW-0520">NAD</keyword>
<keyword id="KW-0614">Plasmid</keyword>
<keyword id="KW-0874">Quinone</keyword>
<keyword id="KW-1185">Reference proteome</keyword>
<keyword id="KW-1278">Translocase</keyword>
<keyword id="KW-0830">Ubiquinone</keyword>
<dbReference type="EC" id="7.1.1.-"/>
<dbReference type="EMBL" id="AJ245399">
    <property type="protein sequence ID" value="CAB51633.1"/>
    <property type="molecule type" value="Genomic_DNA"/>
</dbReference>
<dbReference type="EMBL" id="AE006469">
    <property type="protein sequence ID" value="AAK65488.1"/>
    <property type="molecule type" value="Genomic_DNA"/>
</dbReference>
<dbReference type="PIR" id="F95365">
    <property type="entry name" value="F95365"/>
</dbReference>
<dbReference type="RefSeq" id="NP_436076.1">
    <property type="nucleotide sequence ID" value="NC_003037.1"/>
</dbReference>
<dbReference type="SMR" id="P56910"/>
<dbReference type="EnsemblBacteria" id="AAK65488">
    <property type="protein sequence ID" value="AAK65488"/>
    <property type="gene ID" value="SMa1526"/>
</dbReference>
<dbReference type="KEGG" id="sme:SMa1526"/>
<dbReference type="PATRIC" id="fig|266834.11.peg.861"/>
<dbReference type="HOGENOM" id="CLU_054362_2_0_5"/>
<dbReference type="OrthoDB" id="9807941at2"/>
<dbReference type="Proteomes" id="UP000001976">
    <property type="component" value="Plasmid pSymA"/>
</dbReference>
<dbReference type="GO" id="GO:0051537">
    <property type="term" value="F:2 iron, 2 sulfur cluster binding"/>
    <property type="evidence" value="ECO:0007669"/>
    <property type="project" value="UniProtKB-KW"/>
</dbReference>
<dbReference type="GO" id="GO:0046872">
    <property type="term" value="F:metal ion binding"/>
    <property type="evidence" value="ECO:0007669"/>
    <property type="project" value="UniProtKB-KW"/>
</dbReference>
<dbReference type="GO" id="GO:0003954">
    <property type="term" value="F:NADH dehydrogenase activity"/>
    <property type="evidence" value="ECO:0007669"/>
    <property type="project" value="TreeGrafter"/>
</dbReference>
<dbReference type="GO" id="GO:0048038">
    <property type="term" value="F:quinone binding"/>
    <property type="evidence" value="ECO:0007669"/>
    <property type="project" value="UniProtKB-KW"/>
</dbReference>
<dbReference type="CDD" id="cd03064">
    <property type="entry name" value="TRX_Fd_NuoE"/>
    <property type="match status" value="1"/>
</dbReference>
<dbReference type="FunFam" id="1.10.10.1590:FF:000001">
    <property type="entry name" value="NADH-quinone oxidoreductase subunit E"/>
    <property type="match status" value="1"/>
</dbReference>
<dbReference type="Gene3D" id="3.40.30.10">
    <property type="entry name" value="Glutaredoxin"/>
    <property type="match status" value="1"/>
</dbReference>
<dbReference type="Gene3D" id="1.10.10.1590">
    <property type="entry name" value="NADH-quinone oxidoreductase subunit E"/>
    <property type="match status" value="1"/>
</dbReference>
<dbReference type="InterPro" id="IPR002023">
    <property type="entry name" value="NuoE-like"/>
</dbReference>
<dbReference type="InterPro" id="IPR042128">
    <property type="entry name" value="NuoE_dom"/>
</dbReference>
<dbReference type="InterPro" id="IPR041921">
    <property type="entry name" value="NuoE_N"/>
</dbReference>
<dbReference type="InterPro" id="IPR036249">
    <property type="entry name" value="Thioredoxin-like_sf"/>
</dbReference>
<dbReference type="NCBIfam" id="TIGR01958">
    <property type="entry name" value="nuoE_fam"/>
    <property type="match status" value="1"/>
</dbReference>
<dbReference type="NCBIfam" id="NF005722">
    <property type="entry name" value="PRK07539.1-2"/>
    <property type="match status" value="1"/>
</dbReference>
<dbReference type="PANTHER" id="PTHR10371:SF3">
    <property type="entry name" value="NADH DEHYDROGENASE [UBIQUINONE] FLAVOPROTEIN 2, MITOCHONDRIAL"/>
    <property type="match status" value="1"/>
</dbReference>
<dbReference type="PANTHER" id="PTHR10371">
    <property type="entry name" value="NADH DEHYDROGENASE UBIQUINONE FLAVOPROTEIN 2, MITOCHONDRIAL"/>
    <property type="match status" value="1"/>
</dbReference>
<dbReference type="Pfam" id="PF01257">
    <property type="entry name" value="2Fe-2S_thioredx"/>
    <property type="match status" value="1"/>
</dbReference>
<dbReference type="PIRSF" id="PIRSF000216">
    <property type="entry name" value="NADH_DH_24kDa"/>
    <property type="match status" value="1"/>
</dbReference>
<dbReference type="SUPFAM" id="SSF52833">
    <property type="entry name" value="Thioredoxin-like"/>
    <property type="match status" value="1"/>
</dbReference>
<dbReference type="PROSITE" id="PS01099">
    <property type="entry name" value="COMPLEX1_24K"/>
    <property type="match status" value="1"/>
</dbReference>